<reference key="1">
    <citation type="submission" date="2007-06" db="EMBL/GenBank/DDBJ databases">
        <authorList>
            <person name="Dodson R.J."/>
            <person name="Harkins D."/>
            <person name="Paulsen I.T."/>
        </authorList>
    </citation>
    <scope>NUCLEOTIDE SEQUENCE [LARGE SCALE GENOMIC DNA]</scope>
    <source>
        <strain>DSM 24068 / PA7</strain>
    </source>
</reference>
<sequence length="50" mass="5975">MKVLASLKQAKLRHRDCQVVKRRGRLYVICKSNPRFKCVQGRPKPKIKRR</sequence>
<accession>A6V1J0</accession>
<name>RL362_PSEP7</name>
<feature type="chain" id="PRO_0000344704" description="Large ribosomal subunit protein bL36B">
    <location>
        <begin position="1"/>
        <end position="50"/>
    </location>
</feature>
<evidence type="ECO:0000255" key="1">
    <source>
        <dbReference type="HAMAP-Rule" id="MF_00251"/>
    </source>
</evidence>
<evidence type="ECO:0000305" key="2"/>
<proteinExistence type="inferred from homology"/>
<comment type="similarity">
    <text evidence="1">Belongs to the bacterial ribosomal protein bL36 family.</text>
</comment>
<gene>
    <name evidence="1" type="primary">rpmJ2</name>
    <name type="ordered locus">PSPA7_1541</name>
</gene>
<protein>
    <recommendedName>
        <fullName evidence="1">Large ribosomal subunit protein bL36B</fullName>
    </recommendedName>
    <alternativeName>
        <fullName evidence="2">50S ribosomal protein L36 2</fullName>
    </alternativeName>
</protein>
<organism>
    <name type="scientific">Pseudomonas paraeruginosa (strain DSM 24068 / PA7)</name>
    <name type="common">Pseudomonas aeruginosa (strain PA7)</name>
    <dbReference type="NCBI Taxonomy" id="381754"/>
    <lineage>
        <taxon>Bacteria</taxon>
        <taxon>Pseudomonadati</taxon>
        <taxon>Pseudomonadota</taxon>
        <taxon>Gammaproteobacteria</taxon>
        <taxon>Pseudomonadales</taxon>
        <taxon>Pseudomonadaceae</taxon>
        <taxon>Pseudomonas</taxon>
        <taxon>Pseudomonas paraeruginosa</taxon>
    </lineage>
</organism>
<keyword id="KW-0687">Ribonucleoprotein</keyword>
<keyword id="KW-0689">Ribosomal protein</keyword>
<dbReference type="EMBL" id="CP000744">
    <property type="protein sequence ID" value="ABR83488.1"/>
    <property type="molecule type" value="Genomic_DNA"/>
</dbReference>
<dbReference type="SMR" id="A6V1J0"/>
<dbReference type="KEGG" id="pap:PSPA7_1541"/>
<dbReference type="HOGENOM" id="CLU_135723_3_1_6"/>
<dbReference type="Proteomes" id="UP000001582">
    <property type="component" value="Chromosome"/>
</dbReference>
<dbReference type="GO" id="GO:1990904">
    <property type="term" value="C:ribonucleoprotein complex"/>
    <property type="evidence" value="ECO:0007669"/>
    <property type="project" value="UniProtKB-KW"/>
</dbReference>
<dbReference type="GO" id="GO:0005840">
    <property type="term" value="C:ribosome"/>
    <property type="evidence" value="ECO:0007669"/>
    <property type="project" value="UniProtKB-KW"/>
</dbReference>
<dbReference type="GO" id="GO:0003735">
    <property type="term" value="F:structural constituent of ribosome"/>
    <property type="evidence" value="ECO:0007669"/>
    <property type="project" value="InterPro"/>
</dbReference>
<dbReference type="GO" id="GO:0006412">
    <property type="term" value="P:translation"/>
    <property type="evidence" value="ECO:0007669"/>
    <property type="project" value="UniProtKB-UniRule"/>
</dbReference>
<dbReference type="HAMAP" id="MF_00251">
    <property type="entry name" value="Ribosomal_bL36"/>
    <property type="match status" value="1"/>
</dbReference>
<dbReference type="InterPro" id="IPR000473">
    <property type="entry name" value="Ribosomal_bL36"/>
</dbReference>
<dbReference type="InterPro" id="IPR035977">
    <property type="entry name" value="Ribosomal_bL36_sp"/>
</dbReference>
<dbReference type="InterPro" id="IPR047621">
    <property type="entry name" value="Ribosomal_L36_bact"/>
</dbReference>
<dbReference type="NCBIfam" id="NF002021">
    <property type="entry name" value="PRK00831.1"/>
    <property type="match status" value="1"/>
</dbReference>
<dbReference type="NCBIfam" id="TIGR01022">
    <property type="entry name" value="rpmJ_bact"/>
    <property type="match status" value="1"/>
</dbReference>
<dbReference type="PANTHER" id="PTHR47781">
    <property type="entry name" value="50S RIBOSOMAL PROTEIN L36 2"/>
    <property type="match status" value="1"/>
</dbReference>
<dbReference type="PANTHER" id="PTHR47781:SF1">
    <property type="entry name" value="LARGE RIBOSOMAL SUBUNIT PROTEIN BL36B"/>
    <property type="match status" value="1"/>
</dbReference>
<dbReference type="Pfam" id="PF00444">
    <property type="entry name" value="Ribosomal_L36"/>
    <property type="match status" value="1"/>
</dbReference>
<dbReference type="SUPFAM" id="SSF57840">
    <property type="entry name" value="Ribosomal protein L36"/>
    <property type="match status" value="1"/>
</dbReference>
<dbReference type="PROSITE" id="PS00828">
    <property type="entry name" value="RIBOSOMAL_L36"/>
    <property type="match status" value="1"/>
</dbReference>